<dbReference type="EC" id="7.3.2.1" evidence="1"/>
<dbReference type="EMBL" id="CP000312">
    <property type="protein sequence ID" value="ABG85328.1"/>
    <property type="molecule type" value="Genomic_DNA"/>
</dbReference>
<dbReference type="RefSeq" id="WP_003453508.1">
    <property type="nucleotide sequence ID" value="NZ_CAXVKH010000034.1"/>
</dbReference>
<dbReference type="SMR" id="Q0SVB6"/>
<dbReference type="GeneID" id="93003035"/>
<dbReference type="KEGG" id="cpr:CPR_0607"/>
<dbReference type="Proteomes" id="UP000001824">
    <property type="component" value="Chromosome"/>
</dbReference>
<dbReference type="GO" id="GO:0005886">
    <property type="term" value="C:plasma membrane"/>
    <property type="evidence" value="ECO:0007669"/>
    <property type="project" value="UniProtKB-SubCell"/>
</dbReference>
<dbReference type="GO" id="GO:0005524">
    <property type="term" value="F:ATP binding"/>
    <property type="evidence" value="ECO:0007669"/>
    <property type="project" value="UniProtKB-KW"/>
</dbReference>
<dbReference type="GO" id="GO:0016887">
    <property type="term" value="F:ATP hydrolysis activity"/>
    <property type="evidence" value="ECO:0007669"/>
    <property type="project" value="InterPro"/>
</dbReference>
<dbReference type="GO" id="GO:0015415">
    <property type="term" value="F:ATPase-coupled phosphate ion transmembrane transporter activity"/>
    <property type="evidence" value="ECO:0007669"/>
    <property type="project" value="UniProtKB-EC"/>
</dbReference>
<dbReference type="GO" id="GO:0035435">
    <property type="term" value="P:phosphate ion transmembrane transport"/>
    <property type="evidence" value="ECO:0007669"/>
    <property type="project" value="InterPro"/>
</dbReference>
<dbReference type="CDD" id="cd03260">
    <property type="entry name" value="ABC_PstB_phosphate_transporter"/>
    <property type="match status" value="1"/>
</dbReference>
<dbReference type="FunFam" id="3.40.50.300:FF:000132">
    <property type="entry name" value="Phosphate import ATP-binding protein PstB"/>
    <property type="match status" value="1"/>
</dbReference>
<dbReference type="Gene3D" id="3.40.50.300">
    <property type="entry name" value="P-loop containing nucleotide triphosphate hydrolases"/>
    <property type="match status" value="1"/>
</dbReference>
<dbReference type="InterPro" id="IPR003593">
    <property type="entry name" value="AAA+_ATPase"/>
</dbReference>
<dbReference type="InterPro" id="IPR003439">
    <property type="entry name" value="ABC_transporter-like_ATP-bd"/>
</dbReference>
<dbReference type="InterPro" id="IPR017871">
    <property type="entry name" value="ABC_transporter-like_CS"/>
</dbReference>
<dbReference type="InterPro" id="IPR027417">
    <property type="entry name" value="P-loop_NTPase"/>
</dbReference>
<dbReference type="InterPro" id="IPR005670">
    <property type="entry name" value="PstB-like"/>
</dbReference>
<dbReference type="NCBIfam" id="TIGR00972">
    <property type="entry name" value="3a0107s01c2"/>
    <property type="match status" value="1"/>
</dbReference>
<dbReference type="PANTHER" id="PTHR43423">
    <property type="entry name" value="ABC TRANSPORTER I FAMILY MEMBER 17"/>
    <property type="match status" value="1"/>
</dbReference>
<dbReference type="PANTHER" id="PTHR43423:SF1">
    <property type="entry name" value="ABC TRANSPORTER I FAMILY MEMBER 17"/>
    <property type="match status" value="1"/>
</dbReference>
<dbReference type="Pfam" id="PF00005">
    <property type="entry name" value="ABC_tran"/>
    <property type="match status" value="1"/>
</dbReference>
<dbReference type="SMART" id="SM00382">
    <property type="entry name" value="AAA"/>
    <property type="match status" value="1"/>
</dbReference>
<dbReference type="SUPFAM" id="SSF52540">
    <property type="entry name" value="P-loop containing nucleoside triphosphate hydrolases"/>
    <property type="match status" value="1"/>
</dbReference>
<dbReference type="PROSITE" id="PS00211">
    <property type="entry name" value="ABC_TRANSPORTER_1"/>
    <property type="match status" value="1"/>
</dbReference>
<dbReference type="PROSITE" id="PS50893">
    <property type="entry name" value="ABC_TRANSPORTER_2"/>
    <property type="match status" value="1"/>
</dbReference>
<dbReference type="PROSITE" id="PS51238">
    <property type="entry name" value="PSTB"/>
    <property type="match status" value="1"/>
</dbReference>
<organism>
    <name type="scientific">Clostridium perfringens (strain SM101 / Type A)</name>
    <dbReference type="NCBI Taxonomy" id="289380"/>
    <lineage>
        <taxon>Bacteria</taxon>
        <taxon>Bacillati</taxon>
        <taxon>Bacillota</taxon>
        <taxon>Clostridia</taxon>
        <taxon>Eubacteriales</taxon>
        <taxon>Clostridiaceae</taxon>
        <taxon>Clostridium</taxon>
    </lineage>
</organism>
<evidence type="ECO:0000255" key="1">
    <source>
        <dbReference type="HAMAP-Rule" id="MF_01702"/>
    </source>
</evidence>
<proteinExistence type="inferred from homology"/>
<sequence length="253" mass="28589">MSDKKTKIQVRDLDLFYASNHALKKINIDIKENEVTALIGPSGCGKSTFLRTLNRMNDLIPIVRIEGEIQVDGKDIYKDDDVIALRTKVGMVFQKPNLFPMSIYDNVAYGPRVHGIKDKKVLDKIVEESLRDAAIWDEVKNRLKSSALGLSGGQQQRICIARAIAMNPEIILMDEPTSALDPISTLKVEELIRKLEDKYTIVIVTHNMQQAARISDKTAFFLNGELVEFSDTNTIFTNPRDKRTEDYITGRFG</sequence>
<gene>
    <name evidence="1" type="primary">pstB</name>
    <name type="ordered locus">CPR_0607</name>
</gene>
<keyword id="KW-0067">ATP-binding</keyword>
<keyword id="KW-1003">Cell membrane</keyword>
<keyword id="KW-0472">Membrane</keyword>
<keyword id="KW-0547">Nucleotide-binding</keyword>
<keyword id="KW-0592">Phosphate transport</keyword>
<keyword id="KW-1278">Translocase</keyword>
<keyword id="KW-0813">Transport</keyword>
<reference key="1">
    <citation type="journal article" date="2006" name="Genome Res.">
        <title>Skewed genomic variability in strains of the toxigenic bacterial pathogen, Clostridium perfringens.</title>
        <authorList>
            <person name="Myers G.S.A."/>
            <person name="Rasko D.A."/>
            <person name="Cheung J.K."/>
            <person name="Ravel J."/>
            <person name="Seshadri R."/>
            <person name="DeBoy R.T."/>
            <person name="Ren Q."/>
            <person name="Varga J."/>
            <person name="Awad M.M."/>
            <person name="Brinkac L.M."/>
            <person name="Daugherty S.C."/>
            <person name="Haft D.H."/>
            <person name="Dodson R.J."/>
            <person name="Madupu R."/>
            <person name="Nelson W.C."/>
            <person name="Rosovitz M.J."/>
            <person name="Sullivan S.A."/>
            <person name="Khouri H."/>
            <person name="Dimitrov G.I."/>
            <person name="Watkins K.L."/>
            <person name="Mulligan S."/>
            <person name="Benton J."/>
            <person name="Radune D."/>
            <person name="Fisher D.J."/>
            <person name="Atkins H.S."/>
            <person name="Hiscox T."/>
            <person name="Jost B.H."/>
            <person name="Billington S.J."/>
            <person name="Songer J.G."/>
            <person name="McClane B.A."/>
            <person name="Titball R.W."/>
            <person name="Rood J.I."/>
            <person name="Melville S.B."/>
            <person name="Paulsen I.T."/>
        </authorList>
    </citation>
    <scope>NUCLEOTIDE SEQUENCE [LARGE SCALE GENOMIC DNA]</scope>
    <source>
        <strain>SM101 / Type A</strain>
    </source>
</reference>
<comment type="function">
    <text evidence="1">Part of the ABC transporter complex PstSACB involved in phosphate import. Responsible for energy coupling to the transport system.</text>
</comment>
<comment type="catalytic activity">
    <reaction evidence="1">
        <text>phosphate(out) + ATP + H2O = ADP + 2 phosphate(in) + H(+)</text>
        <dbReference type="Rhea" id="RHEA:24440"/>
        <dbReference type="ChEBI" id="CHEBI:15377"/>
        <dbReference type="ChEBI" id="CHEBI:15378"/>
        <dbReference type="ChEBI" id="CHEBI:30616"/>
        <dbReference type="ChEBI" id="CHEBI:43474"/>
        <dbReference type="ChEBI" id="CHEBI:456216"/>
        <dbReference type="EC" id="7.3.2.1"/>
    </reaction>
</comment>
<comment type="subunit">
    <text evidence="1">The complex is composed of two ATP-binding proteins (PstB), two transmembrane proteins (PstC and PstA) and a solute-binding protein (PstS).</text>
</comment>
<comment type="subcellular location">
    <subcellularLocation>
        <location evidence="1">Cell membrane</location>
        <topology evidence="1">Peripheral membrane protein</topology>
    </subcellularLocation>
</comment>
<comment type="similarity">
    <text evidence="1">Belongs to the ABC transporter superfamily. Phosphate importer (TC 3.A.1.7) family.</text>
</comment>
<protein>
    <recommendedName>
        <fullName evidence="1">Phosphate import ATP-binding protein PstB</fullName>
        <ecNumber evidence="1">7.3.2.1</ecNumber>
    </recommendedName>
    <alternativeName>
        <fullName evidence="1">ABC phosphate transporter</fullName>
    </alternativeName>
    <alternativeName>
        <fullName evidence="1">Phosphate-transporting ATPase</fullName>
    </alternativeName>
</protein>
<feature type="chain" id="PRO_0000272440" description="Phosphate import ATP-binding protein PstB">
    <location>
        <begin position="1"/>
        <end position="253"/>
    </location>
</feature>
<feature type="domain" description="ABC transporter" evidence="1">
    <location>
        <begin position="8"/>
        <end position="248"/>
    </location>
</feature>
<feature type="binding site" evidence="1">
    <location>
        <begin position="40"/>
        <end position="47"/>
    </location>
    <ligand>
        <name>ATP</name>
        <dbReference type="ChEBI" id="CHEBI:30616"/>
    </ligand>
</feature>
<name>PSTB_CLOPS</name>
<accession>Q0SVB6</accession>